<sequence>MSNVLVIQSSILGSYSQSAKLLDNFAVEWKQKHPTDNIVIRDLAAEPLPVLDGEIIAALGGNGELNERQKAAAELSLNLIEEVKTADYVAIAVPMYNFGIPVQLKTWIDLICRAGVTFSYTENGPQGLLVGKKVLVVTTTGGAHRNTATDLALAHIQAVLSLVGLNDISVAYAETLNMGPEAQERGLAEATKAIQAFIAAH</sequence>
<gene>
    <name evidence="1" type="primary">azoR</name>
    <name type="ordered locus">Tola_1525</name>
</gene>
<accession>C4LEW9</accession>
<feature type="chain" id="PRO_1000213900" description="FMN-dependent NADH:quinone oxidoreductase">
    <location>
        <begin position="1"/>
        <end position="201"/>
    </location>
</feature>
<feature type="binding site" evidence="1">
    <location>
        <position position="10"/>
    </location>
    <ligand>
        <name>FMN</name>
        <dbReference type="ChEBI" id="CHEBI:58210"/>
    </ligand>
</feature>
<feature type="binding site" evidence="1">
    <location>
        <begin position="16"/>
        <end position="18"/>
    </location>
    <ligand>
        <name>FMN</name>
        <dbReference type="ChEBI" id="CHEBI:58210"/>
    </ligand>
</feature>
<feature type="binding site" evidence="1">
    <location>
        <begin position="95"/>
        <end position="98"/>
    </location>
    <ligand>
        <name>FMN</name>
        <dbReference type="ChEBI" id="CHEBI:58210"/>
    </ligand>
</feature>
<feature type="binding site" evidence="1">
    <location>
        <begin position="139"/>
        <end position="142"/>
    </location>
    <ligand>
        <name>FMN</name>
        <dbReference type="ChEBI" id="CHEBI:58210"/>
    </ligand>
</feature>
<dbReference type="EC" id="1.6.5.-" evidence="1"/>
<dbReference type="EC" id="1.7.1.17" evidence="1"/>
<dbReference type="EMBL" id="CP001616">
    <property type="protein sequence ID" value="ACQ93136.1"/>
    <property type="molecule type" value="Genomic_DNA"/>
</dbReference>
<dbReference type="RefSeq" id="WP_015878608.1">
    <property type="nucleotide sequence ID" value="NC_012691.1"/>
</dbReference>
<dbReference type="SMR" id="C4LEW9"/>
<dbReference type="STRING" id="595494.Tola_1525"/>
<dbReference type="KEGG" id="tau:Tola_1525"/>
<dbReference type="eggNOG" id="COG1182">
    <property type="taxonomic scope" value="Bacteria"/>
</dbReference>
<dbReference type="HOGENOM" id="CLU_088964_0_0_6"/>
<dbReference type="OrthoDB" id="9787136at2"/>
<dbReference type="Proteomes" id="UP000009073">
    <property type="component" value="Chromosome"/>
</dbReference>
<dbReference type="GO" id="GO:0009055">
    <property type="term" value="F:electron transfer activity"/>
    <property type="evidence" value="ECO:0007669"/>
    <property type="project" value="UniProtKB-UniRule"/>
</dbReference>
<dbReference type="GO" id="GO:0010181">
    <property type="term" value="F:FMN binding"/>
    <property type="evidence" value="ECO:0007669"/>
    <property type="project" value="UniProtKB-UniRule"/>
</dbReference>
<dbReference type="GO" id="GO:0016652">
    <property type="term" value="F:oxidoreductase activity, acting on NAD(P)H as acceptor"/>
    <property type="evidence" value="ECO:0007669"/>
    <property type="project" value="UniProtKB-UniRule"/>
</dbReference>
<dbReference type="GO" id="GO:0016655">
    <property type="term" value="F:oxidoreductase activity, acting on NAD(P)H, quinone or similar compound as acceptor"/>
    <property type="evidence" value="ECO:0007669"/>
    <property type="project" value="InterPro"/>
</dbReference>
<dbReference type="Gene3D" id="3.40.50.360">
    <property type="match status" value="1"/>
</dbReference>
<dbReference type="HAMAP" id="MF_01216">
    <property type="entry name" value="Azoreductase_type1"/>
    <property type="match status" value="1"/>
</dbReference>
<dbReference type="InterPro" id="IPR003680">
    <property type="entry name" value="Flavodoxin_fold"/>
</dbReference>
<dbReference type="InterPro" id="IPR029039">
    <property type="entry name" value="Flavoprotein-like_sf"/>
</dbReference>
<dbReference type="InterPro" id="IPR050104">
    <property type="entry name" value="FMN-dep_NADH:Q_OxRdtase_AzoR1"/>
</dbReference>
<dbReference type="InterPro" id="IPR023048">
    <property type="entry name" value="NADH:quinone_OxRdtase_FMN_depd"/>
</dbReference>
<dbReference type="PANTHER" id="PTHR43741">
    <property type="entry name" value="FMN-DEPENDENT NADH-AZOREDUCTASE 1"/>
    <property type="match status" value="1"/>
</dbReference>
<dbReference type="PANTHER" id="PTHR43741:SF2">
    <property type="entry name" value="FMN-DEPENDENT NADH:QUINONE OXIDOREDUCTASE"/>
    <property type="match status" value="1"/>
</dbReference>
<dbReference type="Pfam" id="PF02525">
    <property type="entry name" value="Flavodoxin_2"/>
    <property type="match status" value="1"/>
</dbReference>
<dbReference type="SUPFAM" id="SSF52218">
    <property type="entry name" value="Flavoproteins"/>
    <property type="match status" value="1"/>
</dbReference>
<name>AZOR_TOLAT</name>
<evidence type="ECO:0000255" key="1">
    <source>
        <dbReference type="HAMAP-Rule" id="MF_01216"/>
    </source>
</evidence>
<keyword id="KW-0285">Flavoprotein</keyword>
<keyword id="KW-0288">FMN</keyword>
<keyword id="KW-0520">NAD</keyword>
<keyword id="KW-0560">Oxidoreductase</keyword>
<keyword id="KW-1185">Reference proteome</keyword>
<reference key="1">
    <citation type="submission" date="2009-05" db="EMBL/GenBank/DDBJ databases">
        <title>Complete sequence of Tolumonas auensis DSM 9187.</title>
        <authorList>
            <consortium name="US DOE Joint Genome Institute"/>
            <person name="Lucas S."/>
            <person name="Copeland A."/>
            <person name="Lapidus A."/>
            <person name="Glavina del Rio T."/>
            <person name="Tice H."/>
            <person name="Bruce D."/>
            <person name="Goodwin L."/>
            <person name="Pitluck S."/>
            <person name="Chertkov O."/>
            <person name="Brettin T."/>
            <person name="Detter J.C."/>
            <person name="Han C."/>
            <person name="Larimer F."/>
            <person name="Land M."/>
            <person name="Hauser L."/>
            <person name="Kyrpides N."/>
            <person name="Mikhailova N."/>
            <person name="Spring S."/>
            <person name="Beller H."/>
        </authorList>
    </citation>
    <scope>NUCLEOTIDE SEQUENCE [LARGE SCALE GENOMIC DNA]</scope>
    <source>
        <strain>DSM 9187 / NBRC 110442 / TA 4</strain>
    </source>
</reference>
<comment type="function">
    <text evidence="1">Quinone reductase that provides resistance to thiol-specific stress caused by electrophilic quinones.</text>
</comment>
<comment type="function">
    <text evidence="1">Also exhibits azoreductase activity. Catalyzes the reductive cleavage of the azo bond in aromatic azo compounds to the corresponding amines.</text>
</comment>
<comment type="catalytic activity">
    <reaction evidence="1">
        <text>2 a quinone + NADH + H(+) = 2 a 1,4-benzosemiquinone + NAD(+)</text>
        <dbReference type="Rhea" id="RHEA:65952"/>
        <dbReference type="ChEBI" id="CHEBI:15378"/>
        <dbReference type="ChEBI" id="CHEBI:57540"/>
        <dbReference type="ChEBI" id="CHEBI:57945"/>
        <dbReference type="ChEBI" id="CHEBI:132124"/>
        <dbReference type="ChEBI" id="CHEBI:134225"/>
    </reaction>
</comment>
<comment type="catalytic activity">
    <reaction evidence="1">
        <text>N,N-dimethyl-1,4-phenylenediamine + anthranilate + 2 NAD(+) = 2-(4-dimethylaminophenyl)diazenylbenzoate + 2 NADH + 2 H(+)</text>
        <dbReference type="Rhea" id="RHEA:55872"/>
        <dbReference type="ChEBI" id="CHEBI:15378"/>
        <dbReference type="ChEBI" id="CHEBI:15783"/>
        <dbReference type="ChEBI" id="CHEBI:16567"/>
        <dbReference type="ChEBI" id="CHEBI:57540"/>
        <dbReference type="ChEBI" id="CHEBI:57945"/>
        <dbReference type="ChEBI" id="CHEBI:71579"/>
        <dbReference type="EC" id="1.7.1.17"/>
    </reaction>
</comment>
<comment type="cofactor">
    <cofactor evidence="1">
        <name>FMN</name>
        <dbReference type="ChEBI" id="CHEBI:58210"/>
    </cofactor>
    <text evidence="1">Binds 1 FMN per subunit.</text>
</comment>
<comment type="subunit">
    <text evidence="1">Homodimer.</text>
</comment>
<comment type="similarity">
    <text evidence="1">Belongs to the azoreductase type 1 family.</text>
</comment>
<organism>
    <name type="scientific">Tolumonas auensis (strain DSM 9187 / NBRC 110442 / TA 4)</name>
    <dbReference type="NCBI Taxonomy" id="595494"/>
    <lineage>
        <taxon>Bacteria</taxon>
        <taxon>Pseudomonadati</taxon>
        <taxon>Pseudomonadota</taxon>
        <taxon>Gammaproteobacteria</taxon>
        <taxon>Aeromonadales</taxon>
        <taxon>Aeromonadaceae</taxon>
        <taxon>Tolumonas</taxon>
    </lineage>
</organism>
<protein>
    <recommendedName>
        <fullName evidence="1">FMN-dependent NADH:quinone oxidoreductase</fullName>
        <ecNumber evidence="1">1.6.5.-</ecNumber>
    </recommendedName>
    <alternativeName>
        <fullName evidence="1">Azo-dye reductase</fullName>
    </alternativeName>
    <alternativeName>
        <fullName evidence="1">FMN-dependent NADH-azo compound oxidoreductase</fullName>
    </alternativeName>
    <alternativeName>
        <fullName evidence="1">FMN-dependent NADH-azoreductase</fullName>
        <ecNumber evidence="1">1.7.1.17</ecNumber>
    </alternativeName>
</protein>
<proteinExistence type="inferred from homology"/>